<accession>Q5HAD6</accession>
<accession>Q5FDL1</accession>
<sequence length="202" mass="23232">MFITFEGIDGSGKTTQSRLLTEYLSGVYGVDNVILTREPGGTFFNESVRNLLFSTKNLDKLSELLFFIAMRREHFMKVIKPALTQQKIVICDRFIDSTIAYQGYGHGIDCKLIEELNDLVVDIYPNITFVLDSDINQSVARSNKNGYEFLDLEFYARVRDGFRDIVKRNQYRCYLITNVDATKNINEISAIYLKTIKILHAL</sequence>
<evidence type="ECO:0000255" key="1">
    <source>
        <dbReference type="HAMAP-Rule" id="MF_00165"/>
    </source>
</evidence>
<feature type="chain" id="PRO_0000155273" description="Thymidylate kinase">
    <location>
        <begin position="1"/>
        <end position="202"/>
    </location>
</feature>
<feature type="binding site" evidence="1">
    <location>
        <begin position="7"/>
        <end position="14"/>
    </location>
    <ligand>
        <name>ATP</name>
        <dbReference type="ChEBI" id="CHEBI:30616"/>
    </ligand>
</feature>
<dbReference type="EC" id="2.7.4.9" evidence="1"/>
<dbReference type="EMBL" id="CR767821">
    <property type="protein sequence ID" value="CAH58478.1"/>
    <property type="molecule type" value="Genomic_DNA"/>
</dbReference>
<dbReference type="EMBL" id="CR925678">
    <property type="protein sequence ID" value="CAI27280.1"/>
    <property type="molecule type" value="Genomic_DNA"/>
</dbReference>
<dbReference type="RefSeq" id="WP_011155424.1">
    <property type="nucleotide sequence ID" value="NC_005295.2"/>
</dbReference>
<dbReference type="SMR" id="Q5HAD6"/>
<dbReference type="GeneID" id="33058441"/>
<dbReference type="KEGG" id="eru:Erum7460"/>
<dbReference type="KEGG" id="erw:ERWE_CDS_07860"/>
<dbReference type="eggNOG" id="COG0125">
    <property type="taxonomic scope" value="Bacteria"/>
</dbReference>
<dbReference type="HOGENOM" id="CLU_049131_0_0_5"/>
<dbReference type="Proteomes" id="UP000001021">
    <property type="component" value="Chromosome"/>
</dbReference>
<dbReference type="GO" id="GO:0005829">
    <property type="term" value="C:cytosol"/>
    <property type="evidence" value="ECO:0007669"/>
    <property type="project" value="TreeGrafter"/>
</dbReference>
<dbReference type="GO" id="GO:0005524">
    <property type="term" value="F:ATP binding"/>
    <property type="evidence" value="ECO:0007669"/>
    <property type="project" value="UniProtKB-UniRule"/>
</dbReference>
<dbReference type="GO" id="GO:0004798">
    <property type="term" value="F:dTMP kinase activity"/>
    <property type="evidence" value="ECO:0007669"/>
    <property type="project" value="UniProtKB-UniRule"/>
</dbReference>
<dbReference type="GO" id="GO:0006233">
    <property type="term" value="P:dTDP biosynthetic process"/>
    <property type="evidence" value="ECO:0007669"/>
    <property type="project" value="InterPro"/>
</dbReference>
<dbReference type="GO" id="GO:0006235">
    <property type="term" value="P:dTTP biosynthetic process"/>
    <property type="evidence" value="ECO:0007669"/>
    <property type="project" value="UniProtKB-UniRule"/>
</dbReference>
<dbReference type="GO" id="GO:0006227">
    <property type="term" value="P:dUDP biosynthetic process"/>
    <property type="evidence" value="ECO:0007669"/>
    <property type="project" value="TreeGrafter"/>
</dbReference>
<dbReference type="CDD" id="cd01672">
    <property type="entry name" value="TMPK"/>
    <property type="match status" value="1"/>
</dbReference>
<dbReference type="FunFam" id="3.40.50.300:FF:000225">
    <property type="entry name" value="Thymidylate kinase"/>
    <property type="match status" value="1"/>
</dbReference>
<dbReference type="Gene3D" id="3.40.50.300">
    <property type="entry name" value="P-loop containing nucleotide triphosphate hydrolases"/>
    <property type="match status" value="1"/>
</dbReference>
<dbReference type="HAMAP" id="MF_00165">
    <property type="entry name" value="Thymidylate_kinase"/>
    <property type="match status" value="1"/>
</dbReference>
<dbReference type="InterPro" id="IPR027417">
    <property type="entry name" value="P-loop_NTPase"/>
</dbReference>
<dbReference type="InterPro" id="IPR039430">
    <property type="entry name" value="Thymidylate_kin-like_dom"/>
</dbReference>
<dbReference type="InterPro" id="IPR018095">
    <property type="entry name" value="Thymidylate_kin_CS"/>
</dbReference>
<dbReference type="InterPro" id="IPR018094">
    <property type="entry name" value="Thymidylate_kinase"/>
</dbReference>
<dbReference type="NCBIfam" id="TIGR00041">
    <property type="entry name" value="DTMP_kinase"/>
    <property type="match status" value="1"/>
</dbReference>
<dbReference type="PANTHER" id="PTHR10344">
    <property type="entry name" value="THYMIDYLATE KINASE"/>
    <property type="match status" value="1"/>
</dbReference>
<dbReference type="PANTHER" id="PTHR10344:SF4">
    <property type="entry name" value="UMP-CMP KINASE 2, MITOCHONDRIAL"/>
    <property type="match status" value="1"/>
</dbReference>
<dbReference type="Pfam" id="PF02223">
    <property type="entry name" value="Thymidylate_kin"/>
    <property type="match status" value="1"/>
</dbReference>
<dbReference type="SUPFAM" id="SSF52540">
    <property type="entry name" value="P-loop containing nucleoside triphosphate hydrolases"/>
    <property type="match status" value="1"/>
</dbReference>
<dbReference type="PROSITE" id="PS01331">
    <property type="entry name" value="THYMIDYLATE_KINASE"/>
    <property type="match status" value="1"/>
</dbReference>
<reference key="1">
    <citation type="journal article" date="2005" name="Proc. Natl. Acad. Sci. U.S.A.">
        <title>The genome of the heartwater agent Ehrlichia ruminantium contains multiple tandem repeats of actively variable copy number.</title>
        <authorList>
            <person name="Collins N.E."/>
            <person name="Liebenberg J."/>
            <person name="de Villiers E.P."/>
            <person name="Brayton K.A."/>
            <person name="Louw E."/>
            <person name="Pretorius A."/>
            <person name="Faber F.E."/>
            <person name="van Heerden H."/>
            <person name="Josemans A."/>
            <person name="van Kleef M."/>
            <person name="Steyn H.C."/>
            <person name="van Strijp M.F."/>
            <person name="Zweygarth E."/>
            <person name="Jongejan F."/>
            <person name="Maillard J.C."/>
            <person name="Berthier D."/>
            <person name="Botha M."/>
            <person name="Joubert F."/>
            <person name="Corton C.H."/>
            <person name="Thomson N.R."/>
            <person name="Allsopp M.T."/>
            <person name="Allsopp B.A."/>
        </authorList>
    </citation>
    <scope>NUCLEOTIDE SEQUENCE [LARGE SCALE GENOMIC DNA]</scope>
    <source>
        <strain>Welgevonden</strain>
    </source>
</reference>
<reference key="2">
    <citation type="journal article" date="2006" name="J. Bacteriol.">
        <title>Comparative genomic analysis of three strains of Ehrlichia ruminantium reveals an active process of genome size plasticity.</title>
        <authorList>
            <person name="Frutos R."/>
            <person name="Viari A."/>
            <person name="Ferraz C."/>
            <person name="Morgat A."/>
            <person name="Eychenie S."/>
            <person name="Kandassamy Y."/>
            <person name="Chantal I."/>
            <person name="Bensaid A."/>
            <person name="Coissac E."/>
            <person name="Vachiery N."/>
            <person name="Demaille J."/>
            <person name="Martinez D."/>
        </authorList>
    </citation>
    <scope>NUCLEOTIDE SEQUENCE [LARGE SCALE GENOMIC DNA]</scope>
    <source>
        <strain>Welgevonden</strain>
    </source>
</reference>
<proteinExistence type="inferred from homology"/>
<name>KTHY_EHRRW</name>
<comment type="function">
    <text evidence="1">Phosphorylation of dTMP to form dTDP in both de novo and salvage pathways of dTTP synthesis.</text>
</comment>
<comment type="catalytic activity">
    <reaction evidence="1">
        <text>dTMP + ATP = dTDP + ADP</text>
        <dbReference type="Rhea" id="RHEA:13517"/>
        <dbReference type="ChEBI" id="CHEBI:30616"/>
        <dbReference type="ChEBI" id="CHEBI:58369"/>
        <dbReference type="ChEBI" id="CHEBI:63528"/>
        <dbReference type="ChEBI" id="CHEBI:456216"/>
        <dbReference type="EC" id="2.7.4.9"/>
    </reaction>
</comment>
<comment type="similarity">
    <text evidence="1">Belongs to the thymidylate kinase family.</text>
</comment>
<keyword id="KW-0067">ATP-binding</keyword>
<keyword id="KW-0418">Kinase</keyword>
<keyword id="KW-0545">Nucleotide biosynthesis</keyword>
<keyword id="KW-0547">Nucleotide-binding</keyword>
<keyword id="KW-0808">Transferase</keyword>
<gene>
    <name evidence="1" type="primary">tmk</name>
    <name type="ordered locus">Erum7460</name>
    <name type="ordered locus">ERWE_CDS_07860</name>
</gene>
<protein>
    <recommendedName>
        <fullName evidence="1">Thymidylate kinase</fullName>
        <ecNumber evidence="1">2.7.4.9</ecNumber>
    </recommendedName>
    <alternativeName>
        <fullName evidence="1">dTMP kinase</fullName>
    </alternativeName>
</protein>
<organism>
    <name type="scientific">Ehrlichia ruminantium (strain Welgevonden)</name>
    <dbReference type="NCBI Taxonomy" id="254945"/>
    <lineage>
        <taxon>Bacteria</taxon>
        <taxon>Pseudomonadati</taxon>
        <taxon>Pseudomonadota</taxon>
        <taxon>Alphaproteobacteria</taxon>
        <taxon>Rickettsiales</taxon>
        <taxon>Anaplasmataceae</taxon>
        <taxon>Ehrlichia</taxon>
    </lineage>
</organism>